<keyword id="KW-0010">Activator</keyword>
<keyword id="KW-0235">DNA replication</keyword>
<keyword id="KW-0238">DNA-binding</keyword>
<keyword id="KW-0244">Early protein</keyword>
<keyword id="KW-1048">Host nucleus</keyword>
<keyword id="KW-1017">Isopeptide bond</keyword>
<keyword id="KW-0597">Phosphoprotein</keyword>
<keyword id="KW-0678">Repressor</keyword>
<keyword id="KW-0804">Transcription</keyword>
<keyword id="KW-0805">Transcription regulation</keyword>
<keyword id="KW-0832">Ubl conjugation</keyword>
<organismHost>
    <name type="scientific">Homo sapiens</name>
    <name type="common">Human</name>
    <dbReference type="NCBI Taxonomy" id="9606"/>
</organismHost>
<organism>
    <name type="scientific">Human papillomavirus 66</name>
    <dbReference type="NCBI Taxonomy" id="37119"/>
    <lineage>
        <taxon>Viruses</taxon>
        <taxon>Monodnaviria</taxon>
        <taxon>Shotokuvirae</taxon>
        <taxon>Cossaviricota</taxon>
        <taxon>Papovaviricetes</taxon>
        <taxon>Zurhausenvirales</taxon>
        <taxon>Papillomaviridae</taxon>
        <taxon>Firstpapillomavirinae</taxon>
        <taxon>Alphapapillomavirus</taxon>
        <taxon>Alphapapillomavirus 6</taxon>
    </lineage>
</organism>
<sequence>METLSQRLDACQNKILDCYEKDSKCIIDHIDYWKAVRHEYVLYYKARENDINVLNHQMVPSLQVCKAKACSAIELQIALEAISNTIYKNEEWTLRDTCDELWRTEPKNCFKKEGQHIEVWFDGNKNNCMEYVVWKFIYYNGECGWCKVSSGVDYRGIYYMHDGHKTYYTDFEQEAKKYGCTNIWEVHMETESIYCPDSVSSTCRYNVPPVETVNEYNNHRTTTTASTFVGAQDAAVSHRPGKRPRASESEPDSSRESYAHCVTTDTDISNNANSRSPRINTQSHCGDKTTPVIHLKGEANRLKCCRYRFQKYKTLFTDVTTTYHWTSTDNKDSSIITILYKDETQRDTFLNVVKIPPSVQVILGQMSCP</sequence>
<dbReference type="EMBL" id="U31794">
    <property type="protein sequence ID" value="AAA79502.1"/>
    <property type="molecule type" value="Genomic_DNA"/>
</dbReference>
<dbReference type="SMR" id="Q80958"/>
<dbReference type="Proteomes" id="UP000007673">
    <property type="component" value="Genome"/>
</dbReference>
<dbReference type="GO" id="GO:0042025">
    <property type="term" value="C:host cell nucleus"/>
    <property type="evidence" value="ECO:0007669"/>
    <property type="project" value="UniProtKB-SubCell"/>
</dbReference>
<dbReference type="GO" id="GO:0003677">
    <property type="term" value="F:DNA binding"/>
    <property type="evidence" value="ECO:0007669"/>
    <property type="project" value="UniProtKB-UniRule"/>
</dbReference>
<dbReference type="GO" id="GO:0003700">
    <property type="term" value="F:DNA-binding transcription factor activity"/>
    <property type="evidence" value="ECO:0007669"/>
    <property type="project" value="UniProtKB-UniRule"/>
</dbReference>
<dbReference type="GO" id="GO:0000166">
    <property type="term" value="F:nucleotide binding"/>
    <property type="evidence" value="ECO:0007669"/>
    <property type="project" value="UniProtKB-UniRule"/>
</dbReference>
<dbReference type="GO" id="GO:0006260">
    <property type="term" value="P:DNA replication"/>
    <property type="evidence" value="ECO:0007669"/>
    <property type="project" value="UniProtKB-KW"/>
</dbReference>
<dbReference type="GO" id="GO:0006351">
    <property type="term" value="P:DNA-templated transcription"/>
    <property type="evidence" value="ECO:0007669"/>
    <property type="project" value="UniProtKB-UniRule"/>
</dbReference>
<dbReference type="GO" id="GO:0006275">
    <property type="term" value="P:regulation of DNA replication"/>
    <property type="evidence" value="ECO:0007669"/>
    <property type="project" value="UniProtKB-UniRule"/>
</dbReference>
<dbReference type="GO" id="GO:0039693">
    <property type="term" value="P:viral DNA genome replication"/>
    <property type="evidence" value="ECO:0007669"/>
    <property type="project" value="UniProtKB-UniRule"/>
</dbReference>
<dbReference type="Gene3D" id="3.30.70.330">
    <property type="match status" value="1"/>
</dbReference>
<dbReference type="Gene3D" id="1.10.287.30">
    <property type="entry name" value="E2 (early) protein, N terminal domain, subdomain 1"/>
    <property type="match status" value="1"/>
</dbReference>
<dbReference type="Gene3D" id="2.170.200.10">
    <property type="entry name" value="Papillomavirus E2 early protein domain"/>
    <property type="match status" value="1"/>
</dbReference>
<dbReference type="HAMAP" id="MF_04001">
    <property type="entry name" value="PPV_E2"/>
    <property type="match status" value="1"/>
</dbReference>
<dbReference type="InterPro" id="IPR035975">
    <property type="entry name" value="E2/EBNA1_C_sf"/>
</dbReference>
<dbReference type="InterPro" id="IPR012677">
    <property type="entry name" value="Nucleotide-bd_a/b_plait_sf"/>
</dbReference>
<dbReference type="InterPro" id="IPR000427">
    <property type="entry name" value="Papillomavirus_E2_C"/>
</dbReference>
<dbReference type="InterPro" id="IPR001866">
    <property type="entry name" value="PPV_E2_N"/>
</dbReference>
<dbReference type="InterPro" id="IPR033668">
    <property type="entry name" value="Reg_prot_E2"/>
</dbReference>
<dbReference type="InterPro" id="IPR036050">
    <property type="entry name" value="Regulatory_protein_E2_N"/>
</dbReference>
<dbReference type="InterPro" id="IPR042503">
    <property type="entry name" value="Regulatory_protein_E2_N_1"/>
</dbReference>
<dbReference type="InterPro" id="IPR042504">
    <property type="entry name" value="Regulatory_protein_E2_N_2"/>
</dbReference>
<dbReference type="Pfam" id="PF00511">
    <property type="entry name" value="PPV_E2_C"/>
    <property type="match status" value="1"/>
</dbReference>
<dbReference type="Pfam" id="PF00508">
    <property type="entry name" value="PPV_E2_N"/>
    <property type="match status" value="1"/>
</dbReference>
<dbReference type="SUPFAM" id="SSF51332">
    <property type="entry name" value="E2 regulatory, transactivation domain"/>
    <property type="match status" value="1"/>
</dbReference>
<dbReference type="SUPFAM" id="SSF54957">
    <property type="entry name" value="Viral DNA-binding domain"/>
    <property type="match status" value="1"/>
</dbReference>
<proteinExistence type="inferred from homology"/>
<feature type="chain" id="PRO_0000133241" description="Regulatory protein E2">
    <location>
        <begin position="1"/>
        <end position="369"/>
    </location>
</feature>
<feature type="region of interest" description="Transactivation domain" evidence="1">
    <location>
        <begin position="1"/>
        <end position="200"/>
    </location>
</feature>
<feature type="region of interest" description="Disordered" evidence="2">
    <location>
        <begin position="230"/>
        <end position="257"/>
    </location>
</feature>
<feature type="region of interest" description="DNA-binding domain" evidence="1">
    <location>
        <begin position="289"/>
        <end position="369"/>
    </location>
</feature>
<feature type="compositionally biased region" description="Basic and acidic residues" evidence="2">
    <location>
        <begin position="245"/>
        <end position="257"/>
    </location>
</feature>
<feature type="cross-link" description="Glycyl lysine isopeptide (Lys-Gly) (interchain with G-Cter in SUMO)" evidence="1">
    <location>
        <position position="296"/>
    </location>
</feature>
<name>VE2_HPV66</name>
<accession>Q80958</accession>
<gene>
    <name evidence="1" type="primary">E2</name>
</gene>
<evidence type="ECO:0000255" key="1">
    <source>
        <dbReference type="HAMAP-Rule" id="MF_04001"/>
    </source>
</evidence>
<evidence type="ECO:0000256" key="2">
    <source>
        <dbReference type="SAM" id="MobiDB-lite"/>
    </source>
</evidence>
<reference key="1">
    <citation type="submission" date="1995-10" db="EMBL/GenBank/DDBJ databases">
        <authorList>
            <person name="Delius H."/>
        </authorList>
    </citation>
    <scope>NUCLEOTIDE SEQUENCE [GENOMIC DNA]</scope>
</reference>
<comment type="function">
    <text evidence="1">Plays a role in the initiation of viral DNA replication. A dimer of E2 interacts with a dimer of E1 in order to improve specificity of E1 DNA binding activity. Once the complex recognizes and binds DNA at specific sites, the E2 dimer is removed from DNA. E2 also regulates viral transcription through binding to the E2RE response element (5'-ACCNNNNNNGGT-3') present in multiple copies in the regulatory regions of the viral genome. Activates or represses transcription depending on E2RE's position with regards to proximal promoter elements including the TATA-box. Repression occurs by sterically hindering the assembly of the transcription initiation complex.</text>
</comment>
<comment type="subunit">
    <text evidence="1">Binds DNA as homodimer. Interacts with protein E1; this interaction greatly increases E1 DNA-binding activity. Interacts with protein L1; this interaction enhances E2-dependent replication and transcription activation. Interacts with protein L2; this interaction inhibits E2 transcriptional activity but not DNA replication function E2. Interacts with protein E7; this interaction inhibits E7 oncogenic activity. Interacts with host TAF1; this interaction modulates E2-dependent transcriptional regulation. Interacts with host BRD4; this interaction mediates E2 transcriptional activation function. Additionally, the interaction with host BRD4 on mitotic chromosomes mediates tethering of the viral genome. Interacts with host TOPBP1; this interaction is required for optimal viral DNA replication.</text>
</comment>
<comment type="subcellular location">
    <subcellularLocation>
        <location evidence="1">Host nucleus</location>
    </subcellularLocation>
</comment>
<comment type="PTM">
    <text evidence="1">Phosphorylated.</text>
</comment>
<comment type="PTM">
    <text evidence="1">Sumoylation plays a regulatory role in E2 transcriptional activity.</text>
</comment>
<comment type="similarity">
    <text evidence="1">Belongs to the papillomaviridae E2 protein family.</text>
</comment>
<protein>
    <recommendedName>
        <fullName evidence="1">Regulatory protein E2</fullName>
    </recommendedName>
</protein>